<sequence length="172" mass="18719">MALRIEDKKAIVAEVAEQVSSALSAAVADYRGLTVNEMTSLRKQARESGVYLRVVRNNLARLAIKGTEFECLADALKGPLVLALSKDEPGAAAKLFKNFQKDHNAFEVKNLAMSGELFGPEKLDDFAKLPTREEALATLLNVMQAPVTKFVRTLNEIPSQAVRVFAAVGDSK</sequence>
<reference key="1">
    <citation type="journal article" date="2007" name="PLoS ONE">
        <title>Complete genomic characterization of a pathogenic A.II strain of Francisella tularensis subspecies tularensis.</title>
        <authorList>
            <person name="Beckstrom-Sternberg S.M."/>
            <person name="Auerbach R.K."/>
            <person name="Godbole S."/>
            <person name="Pearson J.V."/>
            <person name="Beckstrom-Sternberg J.S."/>
            <person name="Deng Z."/>
            <person name="Munk C."/>
            <person name="Kubota K."/>
            <person name="Zhou Y."/>
            <person name="Bruce D."/>
            <person name="Noronha J."/>
            <person name="Scheuermann R.H."/>
            <person name="Wang A."/>
            <person name="Wei X."/>
            <person name="Wang J."/>
            <person name="Hao J."/>
            <person name="Wagner D.M."/>
            <person name="Brettin T.S."/>
            <person name="Brown N."/>
            <person name="Gilna P."/>
            <person name="Keim P.S."/>
        </authorList>
    </citation>
    <scope>NUCLEOTIDE SEQUENCE [LARGE SCALE GENOMIC DNA]</scope>
    <source>
        <strain>WY96-3418</strain>
    </source>
</reference>
<proteinExistence type="inferred from homology"/>
<organism>
    <name type="scientific">Francisella tularensis subsp. tularensis (strain WY96-3418)</name>
    <dbReference type="NCBI Taxonomy" id="418136"/>
    <lineage>
        <taxon>Bacteria</taxon>
        <taxon>Pseudomonadati</taxon>
        <taxon>Pseudomonadota</taxon>
        <taxon>Gammaproteobacteria</taxon>
        <taxon>Thiotrichales</taxon>
        <taxon>Francisellaceae</taxon>
        <taxon>Francisella</taxon>
    </lineage>
</organism>
<feature type="chain" id="PRO_1000005504" description="Large ribosomal subunit protein uL10">
    <location>
        <begin position="1"/>
        <end position="172"/>
    </location>
</feature>
<dbReference type="EMBL" id="CP000608">
    <property type="protein sequence ID" value="ABO46199.1"/>
    <property type="molecule type" value="Genomic_DNA"/>
</dbReference>
<dbReference type="RefSeq" id="WP_003023073.1">
    <property type="nucleotide sequence ID" value="NC_009257.1"/>
</dbReference>
<dbReference type="SMR" id="A4IW97"/>
<dbReference type="GeneID" id="75264698"/>
<dbReference type="KEGG" id="ftw:FTW_0232"/>
<dbReference type="HOGENOM" id="CLU_092227_0_1_6"/>
<dbReference type="GO" id="GO:1990904">
    <property type="term" value="C:ribonucleoprotein complex"/>
    <property type="evidence" value="ECO:0007669"/>
    <property type="project" value="UniProtKB-KW"/>
</dbReference>
<dbReference type="GO" id="GO:0005840">
    <property type="term" value="C:ribosome"/>
    <property type="evidence" value="ECO:0007669"/>
    <property type="project" value="UniProtKB-KW"/>
</dbReference>
<dbReference type="GO" id="GO:0070180">
    <property type="term" value="F:large ribosomal subunit rRNA binding"/>
    <property type="evidence" value="ECO:0007669"/>
    <property type="project" value="UniProtKB-UniRule"/>
</dbReference>
<dbReference type="GO" id="GO:0006412">
    <property type="term" value="P:translation"/>
    <property type="evidence" value="ECO:0007669"/>
    <property type="project" value="UniProtKB-UniRule"/>
</dbReference>
<dbReference type="CDD" id="cd05797">
    <property type="entry name" value="Ribosomal_L10"/>
    <property type="match status" value="1"/>
</dbReference>
<dbReference type="Gene3D" id="3.30.70.1730">
    <property type="match status" value="1"/>
</dbReference>
<dbReference type="Gene3D" id="6.10.250.290">
    <property type="match status" value="1"/>
</dbReference>
<dbReference type="HAMAP" id="MF_00362">
    <property type="entry name" value="Ribosomal_uL10"/>
    <property type="match status" value="1"/>
</dbReference>
<dbReference type="InterPro" id="IPR001790">
    <property type="entry name" value="Ribosomal_uL10"/>
</dbReference>
<dbReference type="InterPro" id="IPR043141">
    <property type="entry name" value="Ribosomal_uL10-like_sf"/>
</dbReference>
<dbReference type="InterPro" id="IPR022973">
    <property type="entry name" value="Ribosomal_uL10_bac"/>
</dbReference>
<dbReference type="InterPro" id="IPR047865">
    <property type="entry name" value="Ribosomal_uL10_bac_type"/>
</dbReference>
<dbReference type="NCBIfam" id="NF000955">
    <property type="entry name" value="PRK00099.1-1"/>
    <property type="match status" value="1"/>
</dbReference>
<dbReference type="PANTHER" id="PTHR11560">
    <property type="entry name" value="39S RIBOSOMAL PROTEIN L10, MITOCHONDRIAL"/>
    <property type="match status" value="1"/>
</dbReference>
<dbReference type="Pfam" id="PF00466">
    <property type="entry name" value="Ribosomal_L10"/>
    <property type="match status" value="1"/>
</dbReference>
<dbReference type="SUPFAM" id="SSF160369">
    <property type="entry name" value="Ribosomal protein L10-like"/>
    <property type="match status" value="1"/>
</dbReference>
<gene>
    <name evidence="1" type="primary">rplJ</name>
    <name type="ordered locus">FTW_0232</name>
</gene>
<keyword id="KW-0687">Ribonucleoprotein</keyword>
<keyword id="KW-0689">Ribosomal protein</keyword>
<keyword id="KW-0694">RNA-binding</keyword>
<keyword id="KW-0699">rRNA-binding</keyword>
<name>RL10_FRATW</name>
<evidence type="ECO:0000255" key="1">
    <source>
        <dbReference type="HAMAP-Rule" id="MF_00362"/>
    </source>
</evidence>
<evidence type="ECO:0000305" key="2"/>
<comment type="function">
    <text evidence="1">Forms part of the ribosomal stalk, playing a central role in the interaction of the ribosome with GTP-bound translation factors.</text>
</comment>
<comment type="subunit">
    <text evidence="1">Part of the ribosomal stalk of the 50S ribosomal subunit. The N-terminus interacts with L11 and the large rRNA to form the base of the stalk. The C-terminus forms an elongated spine to which L12 dimers bind in a sequential fashion forming a multimeric L10(L12)X complex.</text>
</comment>
<comment type="similarity">
    <text evidence="1">Belongs to the universal ribosomal protein uL10 family.</text>
</comment>
<accession>A4IW97</accession>
<protein>
    <recommendedName>
        <fullName evidence="1">Large ribosomal subunit protein uL10</fullName>
    </recommendedName>
    <alternativeName>
        <fullName evidence="2">50S ribosomal protein L10</fullName>
    </alternativeName>
</protein>